<sequence length="318" mass="36630">MTDKVQTTLLFLAVGEFSVGILGNAFIGLVNCMDWIKKRKIASIDLILTSLAISRICLLCVILLDCFILVLYPDVYATGKEMRIIDFFWILTNHLSIWFATCLSIYYFFKIANFFHPLFLWMKWRIDRVISWILLGCMVLSVFISLPATENLNADFRFCVKAKRKTNLTWSCRVNKTQHASIKLLLNLATLLPFCVCLMSFFLLILSLRRHIRRMQLSATGCRDPSTEAHVRALKAVISFLLLFIAYYLSFLIATSSYFMPETELAVIFGESIALIYPSSHSFILILGNNKLRHASLKVIWKVMSILKGRKFQQHKQI</sequence>
<reference key="1">
    <citation type="journal article" date="2005" name="Mol. Biol. Evol.">
        <title>Evolution of bitter taste receptors in humans and apes.</title>
        <authorList>
            <person name="Fischer A."/>
            <person name="Gilad Y."/>
            <person name="Man O."/>
            <person name="Paeaebo S."/>
        </authorList>
    </citation>
    <scope>NUCLEOTIDE SEQUENCE [GENOMIC DNA]</scope>
</reference>
<name>TA2R7_PONPY</name>
<feature type="chain" id="PRO_0000082225" description="Taste receptor type 2 member 7">
    <location>
        <begin position="1"/>
        <end position="318"/>
    </location>
</feature>
<feature type="topological domain" description="Extracellular" evidence="2">
    <location>
        <begin position="1"/>
        <end position="9"/>
    </location>
</feature>
<feature type="transmembrane region" description="Helical; Name=1" evidence="2">
    <location>
        <begin position="10"/>
        <end position="30"/>
    </location>
</feature>
<feature type="topological domain" description="Cytoplasmic" evidence="2">
    <location>
        <begin position="31"/>
        <end position="55"/>
    </location>
</feature>
<feature type="transmembrane region" description="Helical; Name=2" evidence="2">
    <location>
        <begin position="56"/>
        <end position="76"/>
    </location>
</feature>
<feature type="topological domain" description="Extracellular" evidence="2">
    <location>
        <begin position="77"/>
        <end position="94"/>
    </location>
</feature>
<feature type="transmembrane region" description="Helical; Name=3" evidence="2">
    <location>
        <begin position="95"/>
        <end position="115"/>
    </location>
</feature>
<feature type="topological domain" description="Cytoplasmic" evidence="2">
    <location>
        <begin position="116"/>
        <end position="128"/>
    </location>
</feature>
<feature type="transmembrane region" description="Helical; Name=4" evidence="2">
    <location>
        <begin position="129"/>
        <end position="149"/>
    </location>
</feature>
<feature type="topological domain" description="Extracellular" evidence="2">
    <location>
        <begin position="150"/>
        <end position="187"/>
    </location>
</feature>
<feature type="transmembrane region" description="Helical; Name=5" evidence="2">
    <location>
        <begin position="188"/>
        <end position="208"/>
    </location>
</feature>
<feature type="topological domain" description="Cytoplasmic" evidence="2">
    <location>
        <begin position="209"/>
        <end position="235"/>
    </location>
</feature>
<feature type="transmembrane region" description="Helical; Name=6" evidence="2">
    <location>
        <begin position="236"/>
        <end position="256"/>
    </location>
</feature>
<feature type="topological domain" description="Extracellular" evidence="2">
    <location>
        <begin position="257"/>
        <end position="266"/>
    </location>
</feature>
<feature type="transmembrane region" description="Helical; Name=7" evidence="2">
    <location>
        <begin position="267"/>
        <end position="287"/>
    </location>
</feature>
<feature type="topological domain" description="Cytoplasmic" evidence="2">
    <location>
        <begin position="288"/>
        <end position="318"/>
    </location>
</feature>
<feature type="glycosylation site" description="N-linked (GlcNAc...) asparagine" evidence="2">
    <location>
        <position position="167"/>
    </location>
</feature>
<feature type="glycosylation site" description="N-linked (GlcNAc...) asparagine" evidence="2">
    <location>
        <position position="175"/>
    </location>
</feature>
<organism>
    <name type="scientific">Pongo pygmaeus</name>
    <name type="common">Bornean orangutan</name>
    <dbReference type="NCBI Taxonomy" id="9600"/>
    <lineage>
        <taxon>Eukaryota</taxon>
        <taxon>Metazoa</taxon>
        <taxon>Chordata</taxon>
        <taxon>Craniata</taxon>
        <taxon>Vertebrata</taxon>
        <taxon>Euteleostomi</taxon>
        <taxon>Mammalia</taxon>
        <taxon>Eutheria</taxon>
        <taxon>Euarchontoglires</taxon>
        <taxon>Primates</taxon>
        <taxon>Haplorrhini</taxon>
        <taxon>Catarrhini</taxon>
        <taxon>Hominidae</taxon>
        <taxon>Pongo</taxon>
    </lineage>
</organism>
<keyword id="KW-0297">G-protein coupled receptor</keyword>
<keyword id="KW-0325">Glycoprotein</keyword>
<keyword id="KW-0472">Membrane</keyword>
<keyword id="KW-0675">Receptor</keyword>
<keyword id="KW-0716">Sensory transduction</keyword>
<keyword id="KW-0919">Taste</keyword>
<keyword id="KW-0807">Transducer</keyword>
<keyword id="KW-0812">Transmembrane</keyword>
<keyword id="KW-1133">Transmembrane helix</keyword>
<gene>
    <name type="primary">TAS2R7</name>
</gene>
<accession>Q645V8</accession>
<evidence type="ECO:0000250" key="1"/>
<evidence type="ECO:0000255" key="2"/>
<evidence type="ECO:0000305" key="3"/>
<comment type="function">
    <text evidence="1">Gustducin-coupled receptor implicated in the perception of bitter compounds in the oral cavity and the gastrointestinal tract. Signals through PLCB2 and the calcium-regulated cation channel TRPM5 (By similarity).</text>
</comment>
<comment type="subcellular location">
    <subcellularLocation>
        <location>Membrane</location>
        <topology>Multi-pass membrane protein</topology>
    </subcellularLocation>
</comment>
<comment type="miscellaneous">
    <text>Several bitter taste receptors are expressed in a single taste receptor cell.</text>
</comment>
<comment type="similarity">
    <text evidence="3">Belongs to the G-protein coupled receptor T2R family.</text>
</comment>
<protein>
    <recommendedName>
        <fullName>Taste receptor type 2 member 7</fullName>
        <shortName>T2R7</shortName>
    </recommendedName>
</protein>
<dbReference type="EMBL" id="AY724969">
    <property type="protein sequence ID" value="AAU21161.1"/>
    <property type="molecule type" value="Genomic_DNA"/>
</dbReference>
<dbReference type="RefSeq" id="XP_054300925.1">
    <property type="nucleotide sequence ID" value="XM_054444950.1"/>
</dbReference>
<dbReference type="SMR" id="Q645V8"/>
<dbReference type="GlyCosmos" id="Q645V8">
    <property type="glycosylation" value="2 sites, No reported glycans"/>
</dbReference>
<dbReference type="GeneID" id="129010544"/>
<dbReference type="GO" id="GO:0005886">
    <property type="term" value="C:plasma membrane"/>
    <property type="evidence" value="ECO:0007669"/>
    <property type="project" value="UniProtKB-ARBA"/>
</dbReference>
<dbReference type="GO" id="GO:0033038">
    <property type="term" value="F:bitter taste receptor activity"/>
    <property type="evidence" value="ECO:0007669"/>
    <property type="project" value="InterPro"/>
</dbReference>
<dbReference type="GO" id="GO:0004930">
    <property type="term" value="F:G protein-coupled receptor activity"/>
    <property type="evidence" value="ECO:0007669"/>
    <property type="project" value="UniProtKB-KW"/>
</dbReference>
<dbReference type="CDD" id="cd15023">
    <property type="entry name" value="7tm_TAS2R7-like"/>
    <property type="match status" value="1"/>
</dbReference>
<dbReference type="FunFam" id="1.20.1070.10:FF:000042">
    <property type="entry name" value="Taste receptor type 2 member 7"/>
    <property type="match status" value="1"/>
</dbReference>
<dbReference type="Gene3D" id="1.20.1070.10">
    <property type="entry name" value="Rhodopsin 7-helix transmembrane proteins"/>
    <property type="match status" value="1"/>
</dbReference>
<dbReference type="InterPro" id="IPR017452">
    <property type="entry name" value="GPCR_Rhodpsn_7TM"/>
</dbReference>
<dbReference type="InterPro" id="IPR007960">
    <property type="entry name" value="TAS2R"/>
</dbReference>
<dbReference type="PANTHER" id="PTHR11394">
    <property type="entry name" value="TASTE RECEPTOR TYPE 2"/>
    <property type="match status" value="1"/>
</dbReference>
<dbReference type="PANTHER" id="PTHR11394:SF58">
    <property type="entry name" value="TASTE RECEPTOR TYPE 2 MEMBER 7"/>
    <property type="match status" value="1"/>
</dbReference>
<dbReference type="Pfam" id="PF05296">
    <property type="entry name" value="TAS2R"/>
    <property type="match status" value="1"/>
</dbReference>
<dbReference type="SUPFAM" id="SSF81321">
    <property type="entry name" value="Family A G protein-coupled receptor-like"/>
    <property type="match status" value="1"/>
</dbReference>
<dbReference type="PROSITE" id="PS50262">
    <property type="entry name" value="G_PROTEIN_RECEP_F1_2"/>
    <property type="match status" value="1"/>
</dbReference>
<proteinExistence type="inferred from homology"/>